<evidence type="ECO:0000255" key="1">
    <source>
        <dbReference type="HAMAP-Rule" id="MF_01358"/>
    </source>
</evidence>
<organism>
    <name type="scientific">Nitrobacter winogradskyi (strain ATCC 25391 / DSM 10237 / CIP 104748 / NCIMB 11846 / Nb-255)</name>
    <dbReference type="NCBI Taxonomy" id="323098"/>
    <lineage>
        <taxon>Bacteria</taxon>
        <taxon>Pseudomonadati</taxon>
        <taxon>Pseudomonadota</taxon>
        <taxon>Alphaproteobacteria</taxon>
        <taxon>Hyphomicrobiales</taxon>
        <taxon>Nitrobacteraceae</taxon>
        <taxon>Nitrobacter</taxon>
    </lineage>
</organism>
<name>NUOD_NITWN</name>
<proteinExistence type="inferred from homology"/>
<sequence length="402" mass="45401">MTEALGTVTPGMRNFTINFGPQHPAAHGVLRLVLELDGEVVERVDPHIGLLHRGTEKLIEQKTYLQAIPYFDRLDYVAPMNQEHAFCLAAERLLGIAVPRRGQLIRVLYCEIGRILSHLLNVTTQAMDVGALTPPLWGFEEREKLMMFYERASGSRMHAAYFRIGGVHQDLPPRLIDDIEAWCDPFLQVVADLDRLLTANRIFKQRNVDIGVVTLEQAWEWGFSGVMVRGSGAAWDLRKAQPYECYAEMDFDIPIGKNGDCYDRYLIRMEEMRQSVRIMKQCIAKLRAPDGQGPVAVEDNKIFPPRRGEMKRSMEALIHHFKLYTEGFHVPAGEIYAAVEAPKGEFGVYLVSDGSNKPYKCKIRAPGFAHLQAMDFICRGHLLADVSAILGSLDIVFGEVDR</sequence>
<protein>
    <recommendedName>
        <fullName evidence="1">NADH-quinone oxidoreductase subunit D</fullName>
        <ecNumber evidence="1">7.1.1.-</ecNumber>
    </recommendedName>
    <alternativeName>
        <fullName evidence="1">NADH dehydrogenase I subunit D</fullName>
    </alternativeName>
    <alternativeName>
        <fullName evidence="1">NDH-1 subunit D</fullName>
    </alternativeName>
</protein>
<gene>
    <name evidence="1" type="primary">nuoD</name>
    <name type="ordered locus">Nwi_1885</name>
</gene>
<keyword id="KW-0997">Cell inner membrane</keyword>
<keyword id="KW-1003">Cell membrane</keyword>
<keyword id="KW-0472">Membrane</keyword>
<keyword id="KW-0520">NAD</keyword>
<keyword id="KW-0874">Quinone</keyword>
<keyword id="KW-1185">Reference proteome</keyword>
<keyword id="KW-1278">Translocase</keyword>
<keyword id="KW-0813">Transport</keyword>
<keyword id="KW-0830">Ubiquinone</keyword>
<dbReference type="EC" id="7.1.1.-" evidence="1"/>
<dbReference type="EMBL" id="CP000115">
    <property type="protein sequence ID" value="ABA05145.1"/>
    <property type="molecule type" value="Genomic_DNA"/>
</dbReference>
<dbReference type="RefSeq" id="WP_011315141.1">
    <property type="nucleotide sequence ID" value="NC_007406.1"/>
</dbReference>
<dbReference type="SMR" id="Q3SRE6"/>
<dbReference type="STRING" id="323098.Nwi_1885"/>
<dbReference type="KEGG" id="nwi:Nwi_1885"/>
<dbReference type="eggNOG" id="COG0649">
    <property type="taxonomic scope" value="Bacteria"/>
</dbReference>
<dbReference type="HOGENOM" id="CLU_015134_1_1_5"/>
<dbReference type="OrthoDB" id="9801496at2"/>
<dbReference type="Proteomes" id="UP000002531">
    <property type="component" value="Chromosome"/>
</dbReference>
<dbReference type="GO" id="GO:0005886">
    <property type="term" value="C:plasma membrane"/>
    <property type="evidence" value="ECO:0007669"/>
    <property type="project" value="UniProtKB-SubCell"/>
</dbReference>
<dbReference type="GO" id="GO:0051287">
    <property type="term" value="F:NAD binding"/>
    <property type="evidence" value="ECO:0007669"/>
    <property type="project" value="InterPro"/>
</dbReference>
<dbReference type="GO" id="GO:0050136">
    <property type="term" value="F:NADH:ubiquinone reductase (non-electrogenic) activity"/>
    <property type="evidence" value="ECO:0007669"/>
    <property type="project" value="UniProtKB-UniRule"/>
</dbReference>
<dbReference type="GO" id="GO:0048038">
    <property type="term" value="F:quinone binding"/>
    <property type="evidence" value="ECO:0007669"/>
    <property type="project" value="UniProtKB-KW"/>
</dbReference>
<dbReference type="FunFam" id="1.10.645.10:FF:000005">
    <property type="entry name" value="NADH-quinone oxidoreductase subunit D"/>
    <property type="match status" value="1"/>
</dbReference>
<dbReference type="Gene3D" id="1.10.645.10">
    <property type="entry name" value="Cytochrome-c3 Hydrogenase, chain B"/>
    <property type="match status" value="1"/>
</dbReference>
<dbReference type="HAMAP" id="MF_01358">
    <property type="entry name" value="NDH1_NuoD"/>
    <property type="match status" value="1"/>
</dbReference>
<dbReference type="InterPro" id="IPR001135">
    <property type="entry name" value="NADH_Q_OxRdtase_suD"/>
</dbReference>
<dbReference type="InterPro" id="IPR014029">
    <property type="entry name" value="NADH_UbQ_OxRdtase_49kDa_CS"/>
</dbReference>
<dbReference type="InterPro" id="IPR022885">
    <property type="entry name" value="NDH1_su_D/H"/>
</dbReference>
<dbReference type="InterPro" id="IPR029014">
    <property type="entry name" value="NiFe-Hase_large"/>
</dbReference>
<dbReference type="NCBIfam" id="TIGR01962">
    <property type="entry name" value="NuoD"/>
    <property type="match status" value="1"/>
</dbReference>
<dbReference type="NCBIfam" id="NF004739">
    <property type="entry name" value="PRK06075.1"/>
    <property type="match status" value="1"/>
</dbReference>
<dbReference type="PANTHER" id="PTHR11993:SF10">
    <property type="entry name" value="NADH DEHYDROGENASE [UBIQUINONE] IRON-SULFUR PROTEIN 2, MITOCHONDRIAL"/>
    <property type="match status" value="1"/>
</dbReference>
<dbReference type="PANTHER" id="PTHR11993">
    <property type="entry name" value="NADH-UBIQUINONE OXIDOREDUCTASE 49 KDA SUBUNIT"/>
    <property type="match status" value="1"/>
</dbReference>
<dbReference type="Pfam" id="PF00346">
    <property type="entry name" value="Complex1_49kDa"/>
    <property type="match status" value="1"/>
</dbReference>
<dbReference type="SUPFAM" id="SSF56762">
    <property type="entry name" value="HydB/Nqo4-like"/>
    <property type="match status" value="1"/>
</dbReference>
<dbReference type="PROSITE" id="PS00535">
    <property type="entry name" value="COMPLEX1_49K"/>
    <property type="match status" value="1"/>
</dbReference>
<accession>Q3SRE6</accession>
<feature type="chain" id="PRO_0000357874" description="NADH-quinone oxidoreductase subunit D">
    <location>
        <begin position="1"/>
        <end position="402"/>
    </location>
</feature>
<reference key="1">
    <citation type="journal article" date="2006" name="Appl. Environ. Microbiol.">
        <title>Genome sequence of the chemolithoautotrophic nitrite-oxidizing bacterium Nitrobacter winogradskyi Nb-255.</title>
        <authorList>
            <person name="Starkenburg S.R."/>
            <person name="Chain P.S.G."/>
            <person name="Sayavedra-Soto L.A."/>
            <person name="Hauser L."/>
            <person name="Land M.L."/>
            <person name="Larimer F.W."/>
            <person name="Malfatti S.A."/>
            <person name="Klotz M.G."/>
            <person name="Bottomley P.J."/>
            <person name="Arp D.J."/>
            <person name="Hickey W.J."/>
        </authorList>
    </citation>
    <scope>NUCLEOTIDE SEQUENCE [LARGE SCALE GENOMIC DNA]</scope>
    <source>
        <strain>ATCC 25391 / DSM 10237 / CIP 104748 / NCIMB 11846 / Nb-255</strain>
    </source>
</reference>
<comment type="function">
    <text evidence="1">NDH-1 shuttles electrons from NADH, via FMN and iron-sulfur (Fe-S) centers, to quinones in the respiratory chain. The immediate electron acceptor for the enzyme in this species is believed to be ubiquinone. Couples the redox reaction to proton translocation (for every two electrons transferred, four hydrogen ions are translocated across the cytoplasmic membrane), and thus conserves the redox energy in a proton gradient.</text>
</comment>
<comment type="catalytic activity">
    <reaction evidence="1">
        <text>a quinone + NADH + 5 H(+)(in) = a quinol + NAD(+) + 4 H(+)(out)</text>
        <dbReference type="Rhea" id="RHEA:57888"/>
        <dbReference type="ChEBI" id="CHEBI:15378"/>
        <dbReference type="ChEBI" id="CHEBI:24646"/>
        <dbReference type="ChEBI" id="CHEBI:57540"/>
        <dbReference type="ChEBI" id="CHEBI:57945"/>
        <dbReference type="ChEBI" id="CHEBI:132124"/>
    </reaction>
</comment>
<comment type="subunit">
    <text evidence="1">NDH-1 is composed of 14 different subunits. Subunits NuoB, C, D, E, F, and G constitute the peripheral sector of the complex.</text>
</comment>
<comment type="subcellular location">
    <subcellularLocation>
        <location evidence="1">Cell inner membrane</location>
        <topology evidence="1">Peripheral membrane protein</topology>
        <orientation evidence="1">Cytoplasmic side</orientation>
    </subcellularLocation>
</comment>
<comment type="similarity">
    <text evidence="1">Belongs to the complex I 49 kDa subunit family.</text>
</comment>